<reference key="1">
    <citation type="journal article" date="2010" name="Chem. Biol.">
        <title>Identification of the viridicatumtoxin and griseofulvin gene clusters from Penicillium aethiopicum.</title>
        <authorList>
            <person name="Chooi Y.H."/>
            <person name="Cacho R."/>
            <person name="Tang Y."/>
        </authorList>
    </citation>
    <scope>NUCLEOTIDE SEQUENCE [GENOMIC DNA]</scope>
    <scope>FUNCTION</scope>
    <source>
        <strain>IBT 5753</strain>
    </source>
</reference>
<reference key="2">
    <citation type="journal article" date="2008" name="J. Antibiot.">
        <title>Viridicatumtoxin B, a new anti-MRSA agent from Penicillium sp. FR11.</title>
        <authorList>
            <person name="Zheng C.J."/>
            <person name="Yu H.E."/>
            <person name="Kim E.H."/>
            <person name="Kim W.G."/>
        </authorList>
    </citation>
    <scope>BIOTECHNOLOGY</scope>
</reference>
<reference key="3">
    <citation type="journal article" date="2013" name="J. Am. Chem. Soc.">
        <title>A cytochrome P450 serves as an unexpected terpene cyclase during fungal meroterpenoid biosynthesis.</title>
        <authorList>
            <person name="Chooi Y.H."/>
            <person name="Hong Y.J."/>
            <person name="Cacho R.A."/>
            <person name="Tantillo D.J."/>
            <person name="Tang Y."/>
        </authorList>
    </citation>
    <scope>FUNCTION</scope>
</reference>
<reference key="4">
    <citation type="journal article" date="2016" name="J. Antibiot.">
        <title>Inhibition of bacterial undecaprenyl pyrophosphate synthase by small fungal molecules.</title>
        <authorList>
            <person name="Inokoshi J."/>
            <person name="Nakamura Y."/>
            <person name="Komada S."/>
            <person name="Komatsu K."/>
            <person name="Umeyama H."/>
            <person name="Tomoda H."/>
        </authorList>
    </citation>
    <scope>BIOTECHNOLOGY</scope>
</reference>
<comment type="function">
    <text evidence="2 3">Malonamoyl-CoA synthetase; part of the gene cluster that mediates the biosynthesis of viridicatumtoxin, a tetracycline-like fungal meroterpenoid with a unique, fused spirobicyclic ring system (PubMed:20534346). The first step of the pathway is the production of the malonamoyl-CoA starter unit for the polyketide synthase vrtA (PubMed:20534346). The aldolase vrtJ may be involved in the synthesis of the malonamate substrate for malonamoyl-CoA synthetase vrtB (PubMed:20534346). The polyketide synthase vrtA then may utilize the malonamoyl-CoA starter unit, followed by sequential condensation of eight malonyl-CoA units to form the polyketide backbone (PubMed:20534346). The cyclization of the last ring could be mediated by the lactamase-like protein vrtG (PubMed:20534346). The proposed post-PKS tailoring steps are a hydroxylation at C5 catalyzed the cytochrome P450 monooxygenase vrtE, a hydroxylation at C12a catalyzed by VrtH and/or VrtI, and an O-methylation by the O-methyltransferase vrtF (PubMed:20534346, PubMed:24161266). VrtC is then proposed to catalyze the transfer of a geranyl group synthesized by vrtD to the aromatic C ring of the tetracyclic polyketide intermediate of viridicatumtoxin to yield previridicatumtoxin (PubMed:20534346). Finally, the cytochrome P450 monooxygenase vrtK catalyzes the spirocyclization of the geranyl moiety of previridicatumtoxin to afford viridicatumtoxin (PubMed:24161266).</text>
</comment>
<comment type="pathway">
    <text evidence="2">Secondary metabolite biosynthesis; terpenoid biosynthesis.</text>
</comment>
<comment type="biotechnology">
    <text evidence="1 4">Viridicatumtoxin and its derivative, viridicatumtoxin B, exhibit anti-methicillin-resistant Staphylococcus aureus (anti-MRSA) activity (PubMed:19168978). Moreover, viridicatumtoxin and a C2 acetyl analog, spirohexaline, have been demonstrated to inhibit bacterial undecaprenyl diphosphate synthase, a potential new target for antibiotic development (PubMed:27049441).</text>
</comment>
<comment type="similarity">
    <text evidence="6">Belongs to the ATP-dependent AMP-binding enzyme family.</text>
</comment>
<accession>D7PHZ3</accession>
<proteinExistence type="evidence at protein level"/>
<evidence type="ECO:0000269" key="1">
    <source>
    </source>
</evidence>
<evidence type="ECO:0000269" key="2">
    <source>
    </source>
</evidence>
<evidence type="ECO:0000269" key="3">
    <source>
    </source>
</evidence>
<evidence type="ECO:0000269" key="4">
    <source>
    </source>
</evidence>
<evidence type="ECO:0000303" key="5">
    <source>
    </source>
</evidence>
<evidence type="ECO:0000305" key="6"/>
<evidence type="ECO:0000305" key="7">
    <source>
    </source>
</evidence>
<organism>
    <name type="scientific">Penicillium aethiopicum</name>
    <dbReference type="NCBI Taxonomy" id="36650"/>
    <lineage>
        <taxon>Eukaryota</taxon>
        <taxon>Fungi</taxon>
        <taxon>Dikarya</taxon>
        <taxon>Ascomycota</taxon>
        <taxon>Pezizomycotina</taxon>
        <taxon>Eurotiomycetes</taxon>
        <taxon>Eurotiomycetidae</taxon>
        <taxon>Eurotiales</taxon>
        <taxon>Aspergillaceae</taxon>
        <taxon>Penicillium</taxon>
    </lineage>
</organism>
<sequence length="723" mass="80013">MAPYLQHFIAWFGKDSILSKLIQIFNPPSHSDSAKIIISDDDGRSPEPPGGEEILWRHSAPKSTQMWAFLQKVNKKYGYSLRTYQDLHHWSITHRGQFWGEAWDYCGIRHSRQYDEVVDEAAAMWPRPAWFRGARLNFAENLLFPKVPQAVSDEAIAVISVDEGGKRDFITWQDLRERVRRCQSGMRALKIQPSDRVAGYVANHSNALVAMLATASLGAIWTAVSPDTGVIGAVDRLVQIEPRLLFTDNAVIYNGRIHPVLTKTQEIITALPSLEAVVVMRTVAGVQEDLPSSPRSPAKRLTYNSFLAQGPETQKLEFVHMPAEHPLYILYSSGTTGPPKCIVHGAIGTLMQHKKEHMLQSDIQPGDRLCFVTTCMWMMWHWLVSGLASGATVVLYNGSPFYYAPSSHGTSAKDDLAMPKLVDELGITQFGASATYFSMLERRKHLPRSLTQGRLSLETLKAVYSTGSPLAPSTFRYIYQAFGSQVNLGSISGGTDIIADFGVPSPLQAVVAGEIQVIALGMAVQAWGPTGMDLSVTGEPGELVQFWGPSGASKYESSYFAKYPGVWAHGDHIQINPRTGGLIMLGRSDGTLNPKGVRFGSAEIYHVLQYHFAAQVEDALCVGRRRRQDTDEMVVLFVKMRQDQLWSLALAEAIRRTVREELSPRHVPELIIECPEIPVTANGKKVEVLVKRIVSGVEVPAAGGSGTVNADCLQWFQEWATQN</sequence>
<protein>
    <recommendedName>
        <fullName evidence="5">Malonamoyl-CoA synthetase vrtB</fullName>
        <ecNumber evidence="7">6.2.1.-</ecNumber>
    </recommendedName>
    <alternativeName>
        <fullName evidence="5">Viridicatumtoxin synthesis protein B</fullName>
    </alternativeName>
</protein>
<keyword id="KW-0067">ATP-binding</keyword>
<keyword id="KW-0436">Ligase</keyword>
<keyword id="KW-0547">Nucleotide-binding</keyword>
<name>VRTB_PENAE</name>
<gene>
    <name evidence="5" type="primary">vrtB</name>
</gene>
<feature type="chain" id="PRO_0000436829" description="Malonamoyl-CoA synthetase vrtB">
    <location>
        <begin position="1"/>
        <end position="723"/>
    </location>
</feature>
<dbReference type="EC" id="6.2.1.-" evidence="7"/>
<dbReference type="EMBL" id="GU574477">
    <property type="protein sequence ID" value="ADI24927.1"/>
    <property type="molecule type" value="Genomic_DNA"/>
</dbReference>
<dbReference type="SMR" id="D7PHZ3"/>
<dbReference type="BioCyc" id="MetaCyc:MONOMER-19275"/>
<dbReference type="UniPathway" id="UPA00213"/>
<dbReference type="GO" id="GO:0030729">
    <property type="term" value="F:acetoacetate-CoA ligase activity"/>
    <property type="evidence" value="ECO:0007669"/>
    <property type="project" value="InterPro"/>
</dbReference>
<dbReference type="GO" id="GO:0005524">
    <property type="term" value="F:ATP binding"/>
    <property type="evidence" value="ECO:0007669"/>
    <property type="project" value="UniProtKB-KW"/>
</dbReference>
<dbReference type="GO" id="GO:0016114">
    <property type="term" value="P:terpenoid biosynthetic process"/>
    <property type="evidence" value="ECO:0007669"/>
    <property type="project" value="UniProtKB-UniPathway"/>
</dbReference>
<dbReference type="GO" id="GO:0140872">
    <property type="term" value="P:viridicatumtoxin biosynthetic process"/>
    <property type="evidence" value="ECO:0000304"/>
    <property type="project" value="GO_Central"/>
</dbReference>
<dbReference type="CDD" id="cd05943">
    <property type="entry name" value="AACS"/>
    <property type="match status" value="1"/>
</dbReference>
<dbReference type="Gene3D" id="3.30.300.30">
    <property type="match status" value="1"/>
</dbReference>
<dbReference type="Gene3D" id="3.40.50.12780">
    <property type="entry name" value="N-terminal domain of ligase-like"/>
    <property type="match status" value="1"/>
</dbReference>
<dbReference type="InterPro" id="IPR005914">
    <property type="entry name" value="Acac_CoA_synth"/>
</dbReference>
<dbReference type="InterPro" id="IPR032387">
    <property type="entry name" value="ACAS_N"/>
</dbReference>
<dbReference type="InterPro" id="IPR025110">
    <property type="entry name" value="AMP-bd_C"/>
</dbReference>
<dbReference type="InterPro" id="IPR045851">
    <property type="entry name" value="AMP-bd_C_sf"/>
</dbReference>
<dbReference type="InterPro" id="IPR020845">
    <property type="entry name" value="AMP-binding_CS"/>
</dbReference>
<dbReference type="InterPro" id="IPR000873">
    <property type="entry name" value="AMP-dep_synth/lig_dom"/>
</dbReference>
<dbReference type="InterPro" id="IPR042099">
    <property type="entry name" value="ANL_N_sf"/>
</dbReference>
<dbReference type="NCBIfam" id="TIGR01217">
    <property type="entry name" value="ac_ac_CoA_syn"/>
    <property type="match status" value="1"/>
</dbReference>
<dbReference type="NCBIfam" id="NF002937">
    <property type="entry name" value="PRK03584.1"/>
    <property type="match status" value="1"/>
</dbReference>
<dbReference type="PANTHER" id="PTHR42921">
    <property type="entry name" value="ACETOACETYL-COA SYNTHETASE"/>
    <property type="match status" value="1"/>
</dbReference>
<dbReference type="PANTHER" id="PTHR42921:SF1">
    <property type="entry name" value="ACETOACETYL-COA SYNTHETASE"/>
    <property type="match status" value="1"/>
</dbReference>
<dbReference type="Pfam" id="PF16177">
    <property type="entry name" value="ACAS_N"/>
    <property type="match status" value="1"/>
</dbReference>
<dbReference type="Pfam" id="PF00501">
    <property type="entry name" value="AMP-binding"/>
    <property type="match status" value="1"/>
</dbReference>
<dbReference type="Pfam" id="PF13193">
    <property type="entry name" value="AMP-binding_C"/>
    <property type="match status" value="1"/>
</dbReference>
<dbReference type="SUPFAM" id="SSF56801">
    <property type="entry name" value="Acetyl-CoA synthetase-like"/>
    <property type="match status" value="1"/>
</dbReference>
<dbReference type="PROSITE" id="PS00455">
    <property type="entry name" value="AMP_BINDING"/>
    <property type="match status" value="1"/>
</dbReference>